<comment type="function">
    <text evidence="2">Catalyzes the transamination of 3-amino-2,3-dideoxy-scyllo-inosose (amino-DOI) into 2-deoxystreptamine (DOS).</text>
</comment>
<comment type="catalytic activity">
    <reaction>
        <text>3-amino-2,3-dideoxy-scyllo-inosose + L-glutamine = 2-deoxystreptamine + 2-oxoglutaramate</text>
        <dbReference type="Rhea" id="RHEA:34151"/>
        <dbReference type="ChEBI" id="CHEBI:16769"/>
        <dbReference type="ChEBI" id="CHEBI:58359"/>
        <dbReference type="ChEBI" id="CHEBI:65002"/>
        <dbReference type="ChEBI" id="CHEBI:65069"/>
        <dbReference type="EC" id="2.6.1.101"/>
    </reaction>
</comment>
<comment type="cofactor">
    <cofactor evidence="1">
        <name>pyridoxal 5'-phosphate</name>
        <dbReference type="ChEBI" id="CHEBI:597326"/>
    </cofactor>
</comment>
<comment type="pathway">
    <text>Metabolic intermediate biosynthesis; 2-deoxystreptamine biosynthesis; 2-deoxystreptamine from D-glucose 6-phosphate: step 4/4.</text>
</comment>
<comment type="pathway">
    <text>Antibiotic biosynthesis; tobramycin biosynthesis.</text>
</comment>
<comment type="similarity">
    <text evidence="2">Belongs to the DegT/DnrJ/EryC1 family. L-glutamine:2-deoxy-scyllo-inosose/scyllo-inosose aminotransferase subfamily.</text>
</comment>
<gene>
    <name type="primary">tobS2</name>
</gene>
<protein>
    <recommendedName>
        <fullName>Putative L-glutamine:3-amino-2,3-dideoxy-scyllo-inosose aminotransferase</fullName>
        <shortName>Putative L-glutamine:amino-DOI aminotransferase</shortName>
        <ecNumber>2.6.1.101</ecNumber>
    </recommendedName>
</protein>
<name>GLADA_STRSD</name>
<dbReference type="EC" id="2.6.1.101"/>
<dbReference type="EMBL" id="AJ810851">
    <property type="protein sequence ID" value="CAH18560.1"/>
    <property type="molecule type" value="Genomic_DNA"/>
</dbReference>
<dbReference type="RefSeq" id="WP_253672097.1">
    <property type="nucleotide sequence ID" value="NZ_JAMTCP010000038.1"/>
</dbReference>
<dbReference type="SMR" id="Q2MF12"/>
<dbReference type="UniPathway" id="UPA00907">
    <property type="reaction ID" value="UER00924"/>
</dbReference>
<dbReference type="UniPathway" id="UPA00971"/>
<dbReference type="GO" id="GO:0030170">
    <property type="term" value="F:pyridoxal phosphate binding"/>
    <property type="evidence" value="ECO:0007669"/>
    <property type="project" value="TreeGrafter"/>
</dbReference>
<dbReference type="GO" id="GO:0008483">
    <property type="term" value="F:transaminase activity"/>
    <property type="evidence" value="ECO:0007669"/>
    <property type="project" value="UniProtKB-KW"/>
</dbReference>
<dbReference type="GO" id="GO:0017000">
    <property type="term" value="P:antibiotic biosynthetic process"/>
    <property type="evidence" value="ECO:0007669"/>
    <property type="project" value="UniProtKB-KW"/>
</dbReference>
<dbReference type="GO" id="GO:0000271">
    <property type="term" value="P:polysaccharide biosynthetic process"/>
    <property type="evidence" value="ECO:0007669"/>
    <property type="project" value="TreeGrafter"/>
</dbReference>
<dbReference type="CDD" id="cd00616">
    <property type="entry name" value="AHBA_syn"/>
    <property type="match status" value="1"/>
</dbReference>
<dbReference type="Gene3D" id="3.90.1150.10">
    <property type="entry name" value="Aspartate Aminotransferase, domain 1"/>
    <property type="match status" value="1"/>
</dbReference>
<dbReference type="Gene3D" id="3.40.640.10">
    <property type="entry name" value="Type I PLP-dependent aspartate aminotransferase-like (Major domain)"/>
    <property type="match status" value="1"/>
</dbReference>
<dbReference type="InterPro" id="IPR000653">
    <property type="entry name" value="DegT/StrS_aminotransferase"/>
</dbReference>
<dbReference type="InterPro" id="IPR015424">
    <property type="entry name" value="PyrdxlP-dep_Trfase"/>
</dbReference>
<dbReference type="InterPro" id="IPR015421">
    <property type="entry name" value="PyrdxlP-dep_Trfase_major"/>
</dbReference>
<dbReference type="InterPro" id="IPR015422">
    <property type="entry name" value="PyrdxlP-dep_Trfase_small"/>
</dbReference>
<dbReference type="PANTHER" id="PTHR30244:SF34">
    <property type="entry name" value="DTDP-4-AMINO-4,6-DIDEOXYGALACTOSE TRANSAMINASE"/>
    <property type="match status" value="1"/>
</dbReference>
<dbReference type="PANTHER" id="PTHR30244">
    <property type="entry name" value="TRANSAMINASE"/>
    <property type="match status" value="1"/>
</dbReference>
<dbReference type="Pfam" id="PF01041">
    <property type="entry name" value="DegT_DnrJ_EryC1"/>
    <property type="match status" value="1"/>
</dbReference>
<dbReference type="PIRSF" id="PIRSF000390">
    <property type="entry name" value="PLP_StrS"/>
    <property type="match status" value="1"/>
</dbReference>
<dbReference type="SUPFAM" id="SSF53383">
    <property type="entry name" value="PLP-dependent transferases"/>
    <property type="match status" value="1"/>
</dbReference>
<evidence type="ECO:0000250" key="1"/>
<evidence type="ECO:0000305" key="2"/>
<proteinExistence type="inferred from homology"/>
<keyword id="KW-0032">Aminotransferase</keyword>
<keyword id="KW-0045">Antibiotic biosynthesis</keyword>
<keyword id="KW-0663">Pyridoxal phosphate</keyword>
<keyword id="KW-0808">Transferase</keyword>
<reference key="1">
    <citation type="submission" date="2004-08" db="EMBL/GenBank/DDBJ databases">
        <title>Comparison of the gene clusters for the biosynthesis of the aminoglycoside antibiotics tobramycin-apramycin (Streptomyces tenebrarius DSM 40477), and hygromycin B (Streptomyces hygroscopicus subsp. hygroscopicus DSM 40578).</title>
        <authorList>
            <person name="Aboshanab K.M.A."/>
            <person name="Schmidt-Beissner H."/>
            <person name="Wehmeier U.F."/>
            <person name="Welzel K."/>
            <person name="Vente A."/>
            <person name="Piepersberg W."/>
        </authorList>
    </citation>
    <scope>NUCLEOTIDE SEQUENCE [GENOMIC DNA]</scope>
</reference>
<organism>
    <name type="scientific">Streptoalloteichus tenebrarius (strain ATCC 17920 / DSM 40477 / JCM 4838 / CBS 697.72 / NBRC 16177 / NCIMB 11028 / NRRL B-12390 / A12253. 1 / ISP 5477)</name>
    <name type="common">Streptomyces tenebrarius</name>
    <dbReference type="NCBI Taxonomy" id="1933"/>
    <lineage>
        <taxon>Bacteria</taxon>
        <taxon>Bacillati</taxon>
        <taxon>Actinomycetota</taxon>
        <taxon>Actinomycetes</taxon>
        <taxon>Pseudonocardiales</taxon>
        <taxon>Pseudonocardiaceae</taxon>
        <taxon>Streptoalloteichus</taxon>
    </lineage>
</organism>
<sequence length="416" mass="46095">MTSELALFGGTPVRTEPFPDGPRFRERDLERIREVLESGSLGGIPFPNRTHRAFAEQFCGRLGARHGVLVANGTVSLSVALRALGVHAGDEVITTGYTWMGTAASIVHINAVPVLVDIDPNTWCIDPAAVEAAITPRTRAIVPVHLANQIADLDALLEIARKHDLVVLEDCAHAHFAEWRGRCVGTHGDAGSFSFESSKIMTSGEGGFLVSGDETTHHRAMSLVNCGRKEEGYDSFEGRMLGWNNRATELQAAFLIGQVEQHDELHAQRKSNVELLTKGLTEIGGFTPVGDDDPRVTRRQYYEVLYRFDPEQWAGVHRDRVLEALLAEGVEFEGITFYPPLHRDSLFTVSAEDWPMIRDRYGDRMGPEDFHLPVSERAAYDESVWVHHSLLTGPATDVDQILEAVAKVRRNVDALR</sequence>
<accession>Q2MF12</accession>
<feature type="chain" id="PRO_0000234051" description="Putative L-glutamine:3-amino-2,3-dideoxy-scyllo-inosose aminotransferase">
    <location>
        <begin position="1"/>
        <end position="416"/>
    </location>
</feature>
<feature type="modified residue" description="N6-(pyridoxal phosphate)lysine" evidence="1">
    <location>
        <position position="199"/>
    </location>
</feature>